<evidence type="ECO:0000255" key="1">
    <source>
        <dbReference type="HAMAP-Rule" id="MF_01152"/>
    </source>
</evidence>
<organism>
    <name type="scientific">Rickettsia peacockii (strain Rustic)</name>
    <dbReference type="NCBI Taxonomy" id="562019"/>
    <lineage>
        <taxon>Bacteria</taxon>
        <taxon>Pseudomonadati</taxon>
        <taxon>Pseudomonadota</taxon>
        <taxon>Alphaproteobacteria</taxon>
        <taxon>Rickettsiales</taxon>
        <taxon>Rickettsiaceae</taxon>
        <taxon>Rickettsieae</taxon>
        <taxon>Rickettsia</taxon>
        <taxon>spotted fever group</taxon>
    </lineage>
</organism>
<protein>
    <recommendedName>
        <fullName evidence="1">Chaperone protein DnaJ</fullName>
    </recommendedName>
</protein>
<proteinExistence type="inferred from homology"/>
<comment type="function">
    <text evidence="1">Participates actively in the response to hyperosmotic and heat shock by preventing the aggregation of stress-denatured proteins and by disaggregating proteins, also in an autonomous, DnaK-independent fashion. Unfolded proteins bind initially to DnaJ; upon interaction with the DnaJ-bound protein, DnaK hydrolyzes its bound ATP, resulting in the formation of a stable complex. GrpE releases ADP from DnaK; ATP binding to DnaK triggers the release of the substrate protein, thus completing the reaction cycle. Several rounds of ATP-dependent interactions between DnaJ, DnaK and GrpE are required for fully efficient folding. Also involved, together with DnaK and GrpE, in the DNA replication of plasmids through activation of initiation proteins.</text>
</comment>
<comment type="cofactor">
    <cofactor evidence="1">
        <name>Zn(2+)</name>
        <dbReference type="ChEBI" id="CHEBI:29105"/>
    </cofactor>
    <text evidence="1">Binds 2 Zn(2+) ions per monomer.</text>
</comment>
<comment type="subunit">
    <text evidence="1">Homodimer.</text>
</comment>
<comment type="subcellular location">
    <subcellularLocation>
        <location evidence="1">Cytoplasm</location>
    </subcellularLocation>
</comment>
<comment type="domain">
    <text evidence="1">The J domain is necessary and sufficient to stimulate DnaK ATPase activity. Zinc center 1 plays an important role in the autonomous, DnaK-independent chaperone activity of DnaJ. Zinc center 2 is essential for interaction with DnaK and for DnaJ activity.</text>
</comment>
<comment type="similarity">
    <text evidence="1">Belongs to the DnaJ family.</text>
</comment>
<keyword id="KW-0143">Chaperone</keyword>
<keyword id="KW-0963">Cytoplasm</keyword>
<keyword id="KW-0235">DNA replication</keyword>
<keyword id="KW-0479">Metal-binding</keyword>
<keyword id="KW-0677">Repeat</keyword>
<keyword id="KW-0346">Stress response</keyword>
<keyword id="KW-0862">Zinc</keyword>
<keyword id="KW-0863">Zinc-finger</keyword>
<accession>C4K111</accession>
<name>DNAJ_RICPU</name>
<feature type="chain" id="PRO_1000213691" description="Chaperone protein DnaJ">
    <location>
        <begin position="1"/>
        <end position="373"/>
    </location>
</feature>
<feature type="domain" description="J" evidence="1">
    <location>
        <begin position="4"/>
        <end position="68"/>
    </location>
</feature>
<feature type="repeat" description="CXXCXGXG motif">
    <location>
        <begin position="149"/>
        <end position="156"/>
    </location>
</feature>
<feature type="repeat" description="CXXCXGXG motif">
    <location>
        <begin position="166"/>
        <end position="173"/>
    </location>
</feature>
<feature type="repeat" description="CXXCXGXG motif">
    <location>
        <begin position="188"/>
        <end position="195"/>
    </location>
</feature>
<feature type="repeat" description="CXXCXGXG motif">
    <location>
        <begin position="202"/>
        <end position="209"/>
    </location>
</feature>
<feature type="zinc finger region" description="CR-type" evidence="1">
    <location>
        <begin position="136"/>
        <end position="214"/>
    </location>
</feature>
<feature type="binding site" evidence="1">
    <location>
        <position position="149"/>
    </location>
    <ligand>
        <name>Zn(2+)</name>
        <dbReference type="ChEBI" id="CHEBI:29105"/>
        <label>1</label>
    </ligand>
</feature>
<feature type="binding site" evidence="1">
    <location>
        <position position="152"/>
    </location>
    <ligand>
        <name>Zn(2+)</name>
        <dbReference type="ChEBI" id="CHEBI:29105"/>
        <label>1</label>
    </ligand>
</feature>
<feature type="binding site" evidence="1">
    <location>
        <position position="166"/>
    </location>
    <ligand>
        <name>Zn(2+)</name>
        <dbReference type="ChEBI" id="CHEBI:29105"/>
        <label>2</label>
    </ligand>
</feature>
<feature type="binding site" evidence="1">
    <location>
        <position position="169"/>
    </location>
    <ligand>
        <name>Zn(2+)</name>
        <dbReference type="ChEBI" id="CHEBI:29105"/>
        <label>2</label>
    </ligand>
</feature>
<feature type="binding site" evidence="1">
    <location>
        <position position="188"/>
    </location>
    <ligand>
        <name>Zn(2+)</name>
        <dbReference type="ChEBI" id="CHEBI:29105"/>
        <label>2</label>
    </ligand>
</feature>
<feature type="binding site" evidence="1">
    <location>
        <position position="191"/>
    </location>
    <ligand>
        <name>Zn(2+)</name>
        <dbReference type="ChEBI" id="CHEBI:29105"/>
        <label>2</label>
    </ligand>
</feature>
<feature type="binding site" evidence="1">
    <location>
        <position position="202"/>
    </location>
    <ligand>
        <name>Zn(2+)</name>
        <dbReference type="ChEBI" id="CHEBI:29105"/>
        <label>1</label>
    </ligand>
</feature>
<feature type="binding site" evidence="1">
    <location>
        <position position="205"/>
    </location>
    <ligand>
        <name>Zn(2+)</name>
        <dbReference type="ChEBI" id="CHEBI:29105"/>
        <label>1</label>
    </ligand>
</feature>
<gene>
    <name evidence="1" type="primary">dnaJ</name>
    <name type="ordered locus">RPR_02060</name>
</gene>
<reference key="1">
    <citation type="journal article" date="2009" name="PLoS ONE">
        <title>Genome sequence of the endosymbiont Rickettsia peacockii and comparison with virulent Rickettsia rickettsii: identification of virulence factors.</title>
        <authorList>
            <person name="Felsheim R.F."/>
            <person name="Kurtti T.J."/>
            <person name="Munderloh U.G."/>
        </authorList>
    </citation>
    <scope>NUCLEOTIDE SEQUENCE [LARGE SCALE GENOMIC DNA]</scope>
    <source>
        <strain>Rustic</strain>
    </source>
</reference>
<sequence>MSQNYYQILGVSKTASQADLKKAYLKLAKQYHPDTTDAKDAEKKFKEINAAYDVLKDEQTRAAYDRLGHDAFQNQQSRGGGGNHGGFHPDINDIFGDFFSDFMGGSRRSSRPTSAKVRGSDLKYNLTINLEEAFHGIEKNISFSSTVKCDTCHGSGSEKGETVTTCDACSGVGATRMQQGFFTIEQACHKCQGNGHIIKNPCKKCHGMGRYHKQRNLSVNIPAGVENGTRIRHTGEGEAGIRGGNSGDLYVDITIKPHDIYKVDGANLHCKLPISFVNAALGGEIEVPVIEGGKVNLTIPAGTQNGDQLRLRSKGMSKMRSTIRGDMLTHIHVEVPKNLSKRQRELLEEFKKESINEKENDGSFFNKMKSLWS</sequence>
<dbReference type="EMBL" id="CP001227">
    <property type="protein sequence ID" value="ACR47262.1"/>
    <property type="molecule type" value="Genomic_DNA"/>
</dbReference>
<dbReference type="RefSeq" id="WP_012736536.1">
    <property type="nucleotide sequence ID" value="NC_012730.1"/>
</dbReference>
<dbReference type="SMR" id="C4K111"/>
<dbReference type="KEGG" id="rpk:RPR_02060"/>
<dbReference type="HOGENOM" id="CLU_017633_0_7_5"/>
<dbReference type="Proteomes" id="UP000005015">
    <property type="component" value="Chromosome"/>
</dbReference>
<dbReference type="GO" id="GO:0005737">
    <property type="term" value="C:cytoplasm"/>
    <property type="evidence" value="ECO:0007669"/>
    <property type="project" value="UniProtKB-SubCell"/>
</dbReference>
<dbReference type="GO" id="GO:0005524">
    <property type="term" value="F:ATP binding"/>
    <property type="evidence" value="ECO:0007669"/>
    <property type="project" value="InterPro"/>
</dbReference>
<dbReference type="GO" id="GO:0031072">
    <property type="term" value="F:heat shock protein binding"/>
    <property type="evidence" value="ECO:0007669"/>
    <property type="project" value="InterPro"/>
</dbReference>
<dbReference type="GO" id="GO:0051082">
    <property type="term" value="F:unfolded protein binding"/>
    <property type="evidence" value="ECO:0007669"/>
    <property type="project" value="UniProtKB-UniRule"/>
</dbReference>
<dbReference type="GO" id="GO:0008270">
    <property type="term" value="F:zinc ion binding"/>
    <property type="evidence" value="ECO:0007669"/>
    <property type="project" value="UniProtKB-UniRule"/>
</dbReference>
<dbReference type="GO" id="GO:0051085">
    <property type="term" value="P:chaperone cofactor-dependent protein refolding"/>
    <property type="evidence" value="ECO:0007669"/>
    <property type="project" value="TreeGrafter"/>
</dbReference>
<dbReference type="GO" id="GO:0006260">
    <property type="term" value="P:DNA replication"/>
    <property type="evidence" value="ECO:0007669"/>
    <property type="project" value="UniProtKB-KW"/>
</dbReference>
<dbReference type="GO" id="GO:0042026">
    <property type="term" value="P:protein refolding"/>
    <property type="evidence" value="ECO:0007669"/>
    <property type="project" value="TreeGrafter"/>
</dbReference>
<dbReference type="GO" id="GO:0009408">
    <property type="term" value="P:response to heat"/>
    <property type="evidence" value="ECO:0007669"/>
    <property type="project" value="InterPro"/>
</dbReference>
<dbReference type="CDD" id="cd06257">
    <property type="entry name" value="DnaJ"/>
    <property type="match status" value="1"/>
</dbReference>
<dbReference type="CDD" id="cd10747">
    <property type="entry name" value="DnaJ_C"/>
    <property type="match status" value="1"/>
</dbReference>
<dbReference type="CDD" id="cd10719">
    <property type="entry name" value="DnaJ_zf"/>
    <property type="match status" value="1"/>
</dbReference>
<dbReference type="FunFam" id="1.10.287.110:FF:000153">
    <property type="entry name" value="Chaperone protein DnaJ"/>
    <property type="match status" value="1"/>
</dbReference>
<dbReference type="FunFam" id="2.10.230.10:FF:000002">
    <property type="entry name" value="Molecular chaperone DnaJ"/>
    <property type="match status" value="1"/>
</dbReference>
<dbReference type="FunFam" id="2.60.260.20:FF:000004">
    <property type="entry name" value="Molecular chaperone DnaJ"/>
    <property type="match status" value="1"/>
</dbReference>
<dbReference type="Gene3D" id="1.10.287.110">
    <property type="entry name" value="DnaJ domain"/>
    <property type="match status" value="1"/>
</dbReference>
<dbReference type="Gene3D" id="2.10.230.10">
    <property type="entry name" value="Heat shock protein DnaJ, cysteine-rich domain"/>
    <property type="match status" value="1"/>
</dbReference>
<dbReference type="Gene3D" id="2.60.260.20">
    <property type="entry name" value="Urease metallochaperone UreE, N-terminal domain"/>
    <property type="match status" value="2"/>
</dbReference>
<dbReference type="HAMAP" id="MF_01152">
    <property type="entry name" value="DnaJ"/>
    <property type="match status" value="1"/>
</dbReference>
<dbReference type="InterPro" id="IPR012724">
    <property type="entry name" value="DnaJ"/>
</dbReference>
<dbReference type="InterPro" id="IPR002939">
    <property type="entry name" value="DnaJ_C"/>
</dbReference>
<dbReference type="InterPro" id="IPR001623">
    <property type="entry name" value="DnaJ_domain"/>
</dbReference>
<dbReference type="InterPro" id="IPR018253">
    <property type="entry name" value="DnaJ_domain_CS"/>
</dbReference>
<dbReference type="InterPro" id="IPR008971">
    <property type="entry name" value="HSP40/DnaJ_pept-bd"/>
</dbReference>
<dbReference type="InterPro" id="IPR001305">
    <property type="entry name" value="HSP_DnaJ_Cys-rich_dom"/>
</dbReference>
<dbReference type="InterPro" id="IPR036410">
    <property type="entry name" value="HSP_DnaJ_Cys-rich_dom_sf"/>
</dbReference>
<dbReference type="InterPro" id="IPR036869">
    <property type="entry name" value="J_dom_sf"/>
</dbReference>
<dbReference type="NCBIfam" id="TIGR02349">
    <property type="entry name" value="DnaJ_bact"/>
    <property type="match status" value="1"/>
</dbReference>
<dbReference type="NCBIfam" id="NF008035">
    <property type="entry name" value="PRK10767.1"/>
    <property type="match status" value="1"/>
</dbReference>
<dbReference type="NCBIfam" id="NF010893">
    <property type="entry name" value="PRK14300.1"/>
    <property type="match status" value="1"/>
</dbReference>
<dbReference type="PANTHER" id="PTHR43096">
    <property type="entry name" value="DNAJ HOMOLOG 1, MITOCHONDRIAL-RELATED"/>
    <property type="match status" value="1"/>
</dbReference>
<dbReference type="PANTHER" id="PTHR43096:SF52">
    <property type="entry name" value="DNAJ HOMOLOG 1, MITOCHONDRIAL-RELATED"/>
    <property type="match status" value="1"/>
</dbReference>
<dbReference type="Pfam" id="PF00226">
    <property type="entry name" value="DnaJ"/>
    <property type="match status" value="1"/>
</dbReference>
<dbReference type="Pfam" id="PF01556">
    <property type="entry name" value="DnaJ_C"/>
    <property type="match status" value="1"/>
</dbReference>
<dbReference type="Pfam" id="PF00684">
    <property type="entry name" value="DnaJ_CXXCXGXG"/>
    <property type="match status" value="1"/>
</dbReference>
<dbReference type="PRINTS" id="PR00625">
    <property type="entry name" value="JDOMAIN"/>
</dbReference>
<dbReference type="SMART" id="SM00271">
    <property type="entry name" value="DnaJ"/>
    <property type="match status" value="1"/>
</dbReference>
<dbReference type="SUPFAM" id="SSF46565">
    <property type="entry name" value="Chaperone J-domain"/>
    <property type="match status" value="1"/>
</dbReference>
<dbReference type="SUPFAM" id="SSF57938">
    <property type="entry name" value="DnaJ/Hsp40 cysteine-rich domain"/>
    <property type="match status" value="1"/>
</dbReference>
<dbReference type="SUPFAM" id="SSF49493">
    <property type="entry name" value="HSP40/DnaJ peptide-binding domain"/>
    <property type="match status" value="2"/>
</dbReference>
<dbReference type="PROSITE" id="PS00636">
    <property type="entry name" value="DNAJ_1"/>
    <property type="match status" value="1"/>
</dbReference>
<dbReference type="PROSITE" id="PS50076">
    <property type="entry name" value="DNAJ_2"/>
    <property type="match status" value="1"/>
</dbReference>
<dbReference type="PROSITE" id="PS51188">
    <property type="entry name" value="ZF_CR"/>
    <property type="match status" value="1"/>
</dbReference>